<proteinExistence type="evidence at protein level"/>
<accession>P9WJ53</accession>
<accession>L0T7Q5</accession>
<accession>P71979</accession>
<accession>Q8VJY4</accession>
<evidence type="ECO:0000305" key="1">
    <source>
    </source>
</evidence>
<evidence type="ECO:0007829" key="2">
    <source>
        <dbReference type="PDB" id="7E4J"/>
    </source>
</evidence>
<name>VPB12_MYCTU</name>
<dbReference type="EMBL" id="AL123456">
    <property type="protein sequence ID" value="CCP44487.1"/>
    <property type="molecule type" value="Genomic_DNA"/>
</dbReference>
<dbReference type="PIR" id="D70686">
    <property type="entry name" value="D70686"/>
</dbReference>
<dbReference type="RefSeq" id="NP_216237.2">
    <property type="nucleotide sequence ID" value="NC_000962.3"/>
</dbReference>
<dbReference type="RefSeq" id="WP_003408469.1">
    <property type="nucleotide sequence ID" value="NZ_NVQJ01000010.1"/>
</dbReference>
<dbReference type="PDB" id="7E4J">
    <property type="method" value="X-ray"/>
    <property type="resolution" value="1.63 A"/>
    <property type="chains" value="A/B/C/D=1-44"/>
</dbReference>
<dbReference type="PDBsum" id="7E4J"/>
<dbReference type="SMR" id="P9WJ53"/>
<dbReference type="STRING" id="83332.Rv1721c"/>
<dbReference type="PaxDb" id="83332-Rv1721c"/>
<dbReference type="DNASU" id="885182"/>
<dbReference type="GeneID" id="885182"/>
<dbReference type="KEGG" id="mtu:Rv1721c"/>
<dbReference type="KEGG" id="mtv:RVBD_1721c"/>
<dbReference type="TubercuList" id="Rv1721c"/>
<dbReference type="eggNOG" id="ENOG502ZUJE">
    <property type="taxonomic scope" value="Bacteria"/>
</dbReference>
<dbReference type="InParanoid" id="P9WJ53"/>
<dbReference type="OrthoDB" id="7107936at2"/>
<dbReference type="Proteomes" id="UP000001584">
    <property type="component" value="Chromosome"/>
</dbReference>
<dbReference type="GO" id="GO:0006355">
    <property type="term" value="P:regulation of DNA-templated transcription"/>
    <property type="evidence" value="ECO:0007669"/>
    <property type="project" value="InterPro"/>
</dbReference>
<dbReference type="InterPro" id="IPR053853">
    <property type="entry name" value="FitA-like_RHH"/>
</dbReference>
<dbReference type="InterPro" id="IPR010985">
    <property type="entry name" value="Ribbon_hlx_hlx"/>
</dbReference>
<dbReference type="Pfam" id="PF22513">
    <property type="entry name" value="FitA-like_RHH"/>
    <property type="match status" value="1"/>
</dbReference>
<dbReference type="SUPFAM" id="SSF47598">
    <property type="entry name" value="Ribbon-helix-helix"/>
    <property type="match status" value="1"/>
</dbReference>
<sequence>MSAMVQIRNVPDELLHELKARAAAQRMSLSDFLLARLAEIAEEPALDDVLDRLAALPRRDLGASAAELVDEARSE</sequence>
<feature type="chain" id="PRO_0000408059" description="Putative antitoxin VapB12">
    <location>
        <begin position="1"/>
        <end position="75"/>
    </location>
</feature>
<feature type="strand" evidence="2">
    <location>
        <begin position="2"/>
        <end position="11"/>
    </location>
</feature>
<feature type="helix" evidence="2">
    <location>
        <begin position="12"/>
        <end position="24"/>
    </location>
</feature>
<feature type="helix" evidence="2">
    <location>
        <begin position="29"/>
        <end position="42"/>
    </location>
</feature>
<protein>
    <recommendedName>
        <fullName>Putative antitoxin VapB12</fullName>
    </recommendedName>
</protein>
<keyword id="KW-0002">3D-structure</keyword>
<keyword id="KW-1185">Reference proteome</keyword>
<keyword id="KW-1277">Toxin-antitoxin system</keyword>
<organism>
    <name type="scientific">Mycobacterium tuberculosis (strain ATCC 25618 / H37Rv)</name>
    <dbReference type="NCBI Taxonomy" id="83332"/>
    <lineage>
        <taxon>Bacteria</taxon>
        <taxon>Bacillati</taxon>
        <taxon>Actinomycetota</taxon>
        <taxon>Actinomycetes</taxon>
        <taxon>Mycobacteriales</taxon>
        <taxon>Mycobacteriaceae</taxon>
        <taxon>Mycobacterium</taxon>
        <taxon>Mycobacterium tuberculosis complex</taxon>
    </lineage>
</organism>
<gene>
    <name type="primary">vapB12</name>
    <name type="ordered locus">Rv1721c</name>
</gene>
<reference key="1">
    <citation type="journal article" date="1998" name="Nature">
        <title>Deciphering the biology of Mycobacterium tuberculosis from the complete genome sequence.</title>
        <authorList>
            <person name="Cole S.T."/>
            <person name="Brosch R."/>
            <person name="Parkhill J."/>
            <person name="Garnier T."/>
            <person name="Churcher C.M."/>
            <person name="Harris D.E."/>
            <person name="Gordon S.V."/>
            <person name="Eiglmeier K."/>
            <person name="Gas S."/>
            <person name="Barry C.E. III"/>
            <person name="Tekaia F."/>
            <person name="Badcock K."/>
            <person name="Basham D."/>
            <person name="Brown D."/>
            <person name="Chillingworth T."/>
            <person name="Connor R."/>
            <person name="Davies R.M."/>
            <person name="Devlin K."/>
            <person name="Feltwell T."/>
            <person name="Gentles S."/>
            <person name="Hamlin N."/>
            <person name="Holroyd S."/>
            <person name="Hornsby T."/>
            <person name="Jagels K."/>
            <person name="Krogh A."/>
            <person name="McLean J."/>
            <person name="Moule S."/>
            <person name="Murphy L.D."/>
            <person name="Oliver S."/>
            <person name="Osborne J."/>
            <person name="Quail M.A."/>
            <person name="Rajandream M.A."/>
            <person name="Rogers J."/>
            <person name="Rutter S."/>
            <person name="Seeger K."/>
            <person name="Skelton S."/>
            <person name="Squares S."/>
            <person name="Squares R."/>
            <person name="Sulston J.E."/>
            <person name="Taylor K."/>
            <person name="Whitehead S."/>
            <person name="Barrell B.G."/>
        </authorList>
    </citation>
    <scope>NUCLEOTIDE SEQUENCE [LARGE SCALE GENOMIC DNA]</scope>
    <source>
        <strain>ATCC 25618 / H37Rv</strain>
    </source>
</reference>
<reference key="2">
    <citation type="journal article" date="2005" name="Nucleic Acids Res.">
        <title>Toxin-antitoxin loci are highly abundant in free-living but lost from host-associated prokaryotes.</title>
        <authorList>
            <person name="Pandey D.P."/>
            <person name="Gerdes K."/>
        </authorList>
    </citation>
    <scope>POSSIBLE FUNCTION</scope>
    <source>
        <strain>ATCC 25618 / H37Rv</strain>
    </source>
</reference>
<reference key="3">
    <citation type="journal article" date="2011" name="Mol. Cell. Proteomics">
        <title>Proteogenomic analysis of Mycobacterium tuberculosis by high resolution mass spectrometry.</title>
        <authorList>
            <person name="Kelkar D.S."/>
            <person name="Kumar D."/>
            <person name="Kumar P."/>
            <person name="Balakrishnan L."/>
            <person name="Muthusamy B."/>
            <person name="Yadav A.K."/>
            <person name="Shrivastava P."/>
            <person name="Marimuthu A."/>
            <person name="Anand S."/>
            <person name="Sundaram H."/>
            <person name="Kingsbury R."/>
            <person name="Harsha H.C."/>
            <person name="Nair B."/>
            <person name="Prasad T.S."/>
            <person name="Chauhan D.S."/>
            <person name="Katoch K."/>
            <person name="Katoch V.M."/>
            <person name="Kumar P."/>
            <person name="Chaerkady R."/>
            <person name="Ramachandran S."/>
            <person name="Dash D."/>
            <person name="Pandey A."/>
        </authorList>
    </citation>
    <scope>IDENTIFICATION BY MASS SPECTROMETRY [LARGE SCALE ANALYSIS]</scope>
    <source>
        <strain>ATCC 25618 / H37Rv</strain>
    </source>
</reference>
<comment type="function">
    <text evidence="1">Putative antitoxin component of a possible type II toxin-antitoxin (TA) system. The cognate toxin is VapC12.</text>
</comment>